<reference key="1">
    <citation type="journal article" date="1992" name="J. Bacteriol.">
        <title>An operon of Bacillus subtilis motility genes transcribed by the sigma D form of RNA polymerase.</title>
        <authorList>
            <person name="Mirel D.B."/>
            <person name="Lustre V.M."/>
            <person name="Chamberlin M.J."/>
        </authorList>
    </citation>
    <scope>NUCLEOTIDE SEQUENCE [GENOMIC DNA]</scope>
</reference>
<reference key="2">
    <citation type="journal article" date="1997" name="Nature">
        <title>The complete genome sequence of the Gram-positive bacterium Bacillus subtilis.</title>
        <authorList>
            <person name="Kunst F."/>
            <person name="Ogasawara N."/>
            <person name="Moszer I."/>
            <person name="Albertini A.M."/>
            <person name="Alloni G."/>
            <person name="Azevedo V."/>
            <person name="Bertero M.G."/>
            <person name="Bessieres P."/>
            <person name="Bolotin A."/>
            <person name="Borchert S."/>
            <person name="Borriss R."/>
            <person name="Boursier L."/>
            <person name="Brans A."/>
            <person name="Braun M."/>
            <person name="Brignell S.C."/>
            <person name="Bron S."/>
            <person name="Brouillet S."/>
            <person name="Bruschi C.V."/>
            <person name="Caldwell B."/>
            <person name="Capuano V."/>
            <person name="Carter N.M."/>
            <person name="Choi S.-K."/>
            <person name="Codani J.-J."/>
            <person name="Connerton I.F."/>
            <person name="Cummings N.J."/>
            <person name="Daniel R.A."/>
            <person name="Denizot F."/>
            <person name="Devine K.M."/>
            <person name="Duesterhoeft A."/>
            <person name="Ehrlich S.D."/>
            <person name="Emmerson P.T."/>
            <person name="Entian K.-D."/>
            <person name="Errington J."/>
            <person name="Fabret C."/>
            <person name="Ferrari E."/>
            <person name="Foulger D."/>
            <person name="Fritz C."/>
            <person name="Fujita M."/>
            <person name="Fujita Y."/>
            <person name="Fuma S."/>
            <person name="Galizzi A."/>
            <person name="Galleron N."/>
            <person name="Ghim S.-Y."/>
            <person name="Glaser P."/>
            <person name="Goffeau A."/>
            <person name="Golightly E.J."/>
            <person name="Grandi G."/>
            <person name="Guiseppi G."/>
            <person name="Guy B.J."/>
            <person name="Haga K."/>
            <person name="Haiech J."/>
            <person name="Harwood C.R."/>
            <person name="Henaut A."/>
            <person name="Hilbert H."/>
            <person name="Holsappel S."/>
            <person name="Hosono S."/>
            <person name="Hullo M.-F."/>
            <person name="Itaya M."/>
            <person name="Jones L.-M."/>
            <person name="Joris B."/>
            <person name="Karamata D."/>
            <person name="Kasahara Y."/>
            <person name="Klaerr-Blanchard M."/>
            <person name="Klein C."/>
            <person name="Kobayashi Y."/>
            <person name="Koetter P."/>
            <person name="Koningstein G."/>
            <person name="Krogh S."/>
            <person name="Kumano M."/>
            <person name="Kurita K."/>
            <person name="Lapidus A."/>
            <person name="Lardinois S."/>
            <person name="Lauber J."/>
            <person name="Lazarevic V."/>
            <person name="Lee S.-M."/>
            <person name="Levine A."/>
            <person name="Liu H."/>
            <person name="Masuda S."/>
            <person name="Mauel C."/>
            <person name="Medigue C."/>
            <person name="Medina N."/>
            <person name="Mellado R.P."/>
            <person name="Mizuno M."/>
            <person name="Moestl D."/>
            <person name="Nakai S."/>
            <person name="Noback M."/>
            <person name="Noone D."/>
            <person name="O'Reilly M."/>
            <person name="Ogawa K."/>
            <person name="Ogiwara A."/>
            <person name="Oudega B."/>
            <person name="Park S.-H."/>
            <person name="Parro V."/>
            <person name="Pohl T.M."/>
            <person name="Portetelle D."/>
            <person name="Porwollik S."/>
            <person name="Prescott A.M."/>
            <person name="Presecan E."/>
            <person name="Pujic P."/>
            <person name="Purnelle B."/>
            <person name="Rapoport G."/>
            <person name="Rey M."/>
            <person name="Reynolds S."/>
            <person name="Rieger M."/>
            <person name="Rivolta C."/>
            <person name="Rocha E."/>
            <person name="Roche B."/>
            <person name="Rose M."/>
            <person name="Sadaie Y."/>
            <person name="Sato T."/>
            <person name="Scanlan E."/>
            <person name="Schleich S."/>
            <person name="Schroeter R."/>
            <person name="Scoffone F."/>
            <person name="Sekiguchi J."/>
            <person name="Sekowska A."/>
            <person name="Seror S.J."/>
            <person name="Serror P."/>
            <person name="Shin B.-S."/>
            <person name="Soldo B."/>
            <person name="Sorokin A."/>
            <person name="Tacconi E."/>
            <person name="Takagi T."/>
            <person name="Takahashi H."/>
            <person name="Takemaru K."/>
            <person name="Takeuchi M."/>
            <person name="Tamakoshi A."/>
            <person name="Tanaka T."/>
            <person name="Terpstra P."/>
            <person name="Tognoni A."/>
            <person name="Tosato V."/>
            <person name="Uchiyama S."/>
            <person name="Vandenbol M."/>
            <person name="Vannier F."/>
            <person name="Vassarotti A."/>
            <person name="Viari A."/>
            <person name="Wambutt R."/>
            <person name="Wedler E."/>
            <person name="Wedler H."/>
            <person name="Weitzenegger T."/>
            <person name="Winters P."/>
            <person name="Wipat A."/>
            <person name="Yamamoto H."/>
            <person name="Yamane K."/>
            <person name="Yasumoto K."/>
            <person name="Yata K."/>
            <person name="Yoshida K."/>
            <person name="Yoshikawa H.-F."/>
            <person name="Zumstein E."/>
            <person name="Yoshikawa H."/>
            <person name="Danchin A."/>
        </authorList>
    </citation>
    <scope>NUCLEOTIDE SEQUENCE [LARGE SCALE GENOMIC DNA]</scope>
    <source>
        <strain>168</strain>
    </source>
</reference>
<evidence type="ECO:0000250" key="1"/>
<evidence type="ECO:0000255" key="2"/>
<evidence type="ECO:0000255" key="3">
    <source>
        <dbReference type="PROSITE-ProRule" id="PRU00473"/>
    </source>
</evidence>
<evidence type="ECO:0000256" key="4">
    <source>
        <dbReference type="SAM" id="MobiDB-lite"/>
    </source>
</evidence>
<evidence type="ECO:0000305" key="5"/>
<evidence type="ECO:0007829" key="6">
    <source>
        <dbReference type="PDB" id="6YSL"/>
    </source>
</evidence>
<protein>
    <recommendedName>
        <fullName>Motility protein B</fullName>
    </recommendedName>
    <alternativeName>
        <fullName>Chemotaxis protein MotB</fullName>
    </alternativeName>
</protein>
<organism>
    <name type="scientific">Bacillus subtilis (strain 168)</name>
    <dbReference type="NCBI Taxonomy" id="224308"/>
    <lineage>
        <taxon>Bacteria</taxon>
        <taxon>Bacillati</taxon>
        <taxon>Bacillota</taxon>
        <taxon>Bacilli</taxon>
        <taxon>Bacillales</taxon>
        <taxon>Bacillaceae</taxon>
        <taxon>Bacillus</taxon>
    </lineage>
</organism>
<proteinExistence type="evidence at protein level"/>
<feature type="chain" id="PRO_0000189584" description="Motility protein B">
    <location>
        <begin position="1"/>
        <end position="261"/>
    </location>
</feature>
<feature type="topological domain" description="Cytoplasmic" evidence="2">
    <location>
        <begin position="1"/>
        <end position="19"/>
    </location>
</feature>
<feature type="transmembrane region" description="Helical" evidence="2">
    <location>
        <begin position="20"/>
        <end position="41"/>
    </location>
</feature>
<feature type="topological domain" description="Extracellular" evidence="2">
    <location>
        <begin position="42"/>
        <end position="261"/>
    </location>
</feature>
<feature type="domain" description="OmpA-like" evidence="3">
    <location>
        <begin position="132"/>
        <end position="254"/>
    </location>
</feature>
<feature type="region of interest" description="Disordered" evidence="4">
    <location>
        <begin position="68"/>
        <end position="105"/>
    </location>
</feature>
<feature type="compositionally biased region" description="Basic and acidic residues" evidence="4">
    <location>
        <begin position="81"/>
        <end position="102"/>
    </location>
</feature>
<feature type="helix" evidence="6">
    <location>
        <begin position="19"/>
        <end position="36"/>
    </location>
</feature>
<keyword id="KW-0002">3D-structure</keyword>
<keyword id="KW-1003">Cell membrane</keyword>
<keyword id="KW-0145">Chemotaxis</keyword>
<keyword id="KW-0283">Flagellar rotation</keyword>
<keyword id="KW-0472">Membrane</keyword>
<keyword id="KW-1185">Reference proteome</keyword>
<keyword id="KW-0812">Transmembrane</keyword>
<keyword id="KW-1133">Transmembrane helix</keyword>
<sequence length="261" mass="29483">MARKKKKKHEDEHVDESWLVPYADILTLLLALFIVLYASSSIDAAKFQMLSKSFNEVFTGGTGVLDYSSVTPPENESDGIDEVKKEKEEKEKNKKEKEKAADQEELENVKSQVEKFIKDKKLEHQLETKMTSEGLLITIKDSIFFDSGKATIRKEDVPLAKEISNLLVINPPRNIIISGHTDNMPIKNSEFQSNWHLSVMRAVNFMGLLIENPKLDAKVFSAKGYGEYKPVASNKTAEGRSKNRRVEVLILPRGAAETNEK</sequence>
<gene>
    <name type="primary">motB</name>
    <name type="ordered locus">BSU13680</name>
</gene>
<comment type="function">
    <text evidence="1">MotA and MotB comprise the stator element of the flagellar motor complex. Required for the rotation of the flagellar motor. Might be a linker that fastens the torque-generating machinery to the cell wall (By similarity).</text>
</comment>
<comment type="subunit">
    <text evidence="1">Each stator complex is composed of 4 MotA and 2 MotB subunits. 2 A subunits and 1 B subunit are thought to form a single ion channel, so that each stator complex contains two channels (By similarity).</text>
</comment>
<comment type="subcellular location">
    <subcellularLocation>
        <location evidence="1">Cell membrane</location>
        <topology evidence="5">Single-pass type II membrane protein</topology>
    </subcellularLocation>
</comment>
<comment type="similarity">
    <text evidence="5">Belongs to the MotB family.</text>
</comment>
<dbReference type="EMBL" id="M77238">
    <property type="protein sequence ID" value="AAA22603.1"/>
    <property type="molecule type" value="Genomic_DNA"/>
</dbReference>
<dbReference type="EMBL" id="AL009126">
    <property type="protein sequence ID" value="CAB13241.1"/>
    <property type="molecule type" value="Genomic_DNA"/>
</dbReference>
<dbReference type="PIR" id="B42882">
    <property type="entry name" value="B42882"/>
</dbReference>
<dbReference type="RefSeq" id="NP_389251.1">
    <property type="nucleotide sequence ID" value="NC_000964.3"/>
</dbReference>
<dbReference type="RefSeq" id="WP_003232473.1">
    <property type="nucleotide sequence ID" value="NZ_OZ025638.1"/>
</dbReference>
<dbReference type="PDB" id="6YSL">
    <property type="method" value="EM"/>
    <property type="resolution" value="3.50 A"/>
    <property type="chains" value="A/B=1-261"/>
</dbReference>
<dbReference type="PDBsum" id="6YSL"/>
<dbReference type="EMDB" id="EMD-10899"/>
<dbReference type="SMR" id="P28612"/>
<dbReference type="FunCoup" id="P28612">
    <property type="interactions" value="152"/>
</dbReference>
<dbReference type="IntAct" id="P28612">
    <property type="interactions" value="1"/>
</dbReference>
<dbReference type="STRING" id="224308.BSU13680"/>
<dbReference type="TCDB" id="1.A.30.1.3">
    <property type="family name" value="the h(+)- or na(+)-translocating bacterial flagellar motor/exbbd outer membrane transport energizer (mot/exb) superfamily"/>
</dbReference>
<dbReference type="PaxDb" id="224308-BSU13680"/>
<dbReference type="EnsemblBacteria" id="CAB13241">
    <property type="protein sequence ID" value="CAB13241"/>
    <property type="gene ID" value="BSU_13680"/>
</dbReference>
<dbReference type="GeneID" id="939304"/>
<dbReference type="KEGG" id="bsu:BSU13680"/>
<dbReference type="PATRIC" id="fig|224308.179.peg.1485"/>
<dbReference type="eggNOG" id="COG1360">
    <property type="taxonomic scope" value="Bacteria"/>
</dbReference>
<dbReference type="InParanoid" id="P28612"/>
<dbReference type="OrthoDB" id="9815217at2"/>
<dbReference type="PhylomeDB" id="P28612"/>
<dbReference type="BioCyc" id="BSUB:BSU13680-MONOMER"/>
<dbReference type="Proteomes" id="UP000001570">
    <property type="component" value="Chromosome"/>
</dbReference>
<dbReference type="GO" id="GO:0120101">
    <property type="term" value="C:bacterial-type flagellum stator complex"/>
    <property type="evidence" value="ECO:0000318"/>
    <property type="project" value="GO_Central"/>
</dbReference>
<dbReference type="GO" id="GO:0071973">
    <property type="term" value="P:bacterial-type flagellum-dependent cell motility"/>
    <property type="evidence" value="ECO:0000318"/>
    <property type="project" value="GO_Central"/>
</dbReference>
<dbReference type="GO" id="GO:0006935">
    <property type="term" value="P:chemotaxis"/>
    <property type="evidence" value="ECO:0007669"/>
    <property type="project" value="UniProtKB-KW"/>
</dbReference>
<dbReference type="CDD" id="cd07185">
    <property type="entry name" value="OmpA_C-like"/>
    <property type="match status" value="1"/>
</dbReference>
<dbReference type="Gene3D" id="3.30.1330.60">
    <property type="entry name" value="OmpA-like domain"/>
    <property type="match status" value="1"/>
</dbReference>
<dbReference type="InterPro" id="IPR050330">
    <property type="entry name" value="Bact_OuterMem_StrucFunc"/>
</dbReference>
<dbReference type="InterPro" id="IPR025713">
    <property type="entry name" value="MotB-like_N_dom"/>
</dbReference>
<dbReference type="InterPro" id="IPR006665">
    <property type="entry name" value="OmpA-like"/>
</dbReference>
<dbReference type="InterPro" id="IPR036737">
    <property type="entry name" value="OmpA-like_sf"/>
</dbReference>
<dbReference type="NCBIfam" id="NF005831">
    <property type="entry name" value="PRK07734.1"/>
    <property type="match status" value="1"/>
</dbReference>
<dbReference type="PANTHER" id="PTHR30329:SF21">
    <property type="entry name" value="LIPOPROTEIN YIAD-RELATED"/>
    <property type="match status" value="1"/>
</dbReference>
<dbReference type="PANTHER" id="PTHR30329">
    <property type="entry name" value="STATOR ELEMENT OF FLAGELLAR MOTOR COMPLEX"/>
    <property type="match status" value="1"/>
</dbReference>
<dbReference type="Pfam" id="PF13677">
    <property type="entry name" value="MotB_plug"/>
    <property type="match status" value="1"/>
</dbReference>
<dbReference type="Pfam" id="PF00691">
    <property type="entry name" value="OmpA"/>
    <property type="match status" value="1"/>
</dbReference>
<dbReference type="SUPFAM" id="SSF103088">
    <property type="entry name" value="OmpA-like"/>
    <property type="match status" value="1"/>
</dbReference>
<dbReference type="PROSITE" id="PS51123">
    <property type="entry name" value="OMPA_2"/>
    <property type="match status" value="1"/>
</dbReference>
<accession>P28612</accession>
<name>MOTB_BACSU</name>